<evidence type="ECO:0000255" key="1">
    <source>
        <dbReference type="HAMAP-Rule" id="MF_01631"/>
    </source>
</evidence>
<comment type="function">
    <text evidence="1">Catalyzes the last two sequential reactions in the de novo biosynthetic pathway for UDP-N-acetylglucosamine (UDP-GlcNAc). The C-terminal domain catalyzes the transfer of acetyl group from acetyl coenzyme A to glucosamine-1-phosphate (GlcN-1-P) to produce N-acetylglucosamine-1-phosphate (GlcNAc-1-P), which is converted into UDP-GlcNAc by the transfer of uridine 5-monophosphate (from uridine 5-triphosphate), a reaction catalyzed by the N-terminal domain.</text>
</comment>
<comment type="catalytic activity">
    <reaction evidence="1">
        <text>alpha-D-glucosamine 1-phosphate + acetyl-CoA = N-acetyl-alpha-D-glucosamine 1-phosphate + CoA + H(+)</text>
        <dbReference type="Rhea" id="RHEA:13725"/>
        <dbReference type="ChEBI" id="CHEBI:15378"/>
        <dbReference type="ChEBI" id="CHEBI:57287"/>
        <dbReference type="ChEBI" id="CHEBI:57288"/>
        <dbReference type="ChEBI" id="CHEBI:57776"/>
        <dbReference type="ChEBI" id="CHEBI:58516"/>
        <dbReference type="EC" id="2.3.1.157"/>
    </reaction>
</comment>
<comment type="catalytic activity">
    <reaction evidence="1">
        <text>N-acetyl-alpha-D-glucosamine 1-phosphate + UTP + H(+) = UDP-N-acetyl-alpha-D-glucosamine + diphosphate</text>
        <dbReference type="Rhea" id="RHEA:13509"/>
        <dbReference type="ChEBI" id="CHEBI:15378"/>
        <dbReference type="ChEBI" id="CHEBI:33019"/>
        <dbReference type="ChEBI" id="CHEBI:46398"/>
        <dbReference type="ChEBI" id="CHEBI:57705"/>
        <dbReference type="ChEBI" id="CHEBI:57776"/>
        <dbReference type="EC" id="2.7.7.23"/>
    </reaction>
</comment>
<comment type="cofactor">
    <cofactor evidence="1">
        <name>Mg(2+)</name>
        <dbReference type="ChEBI" id="CHEBI:18420"/>
    </cofactor>
    <text evidence="1">Binds 1 Mg(2+) ion per subunit.</text>
</comment>
<comment type="pathway">
    <text evidence="1">Nucleotide-sugar biosynthesis; UDP-N-acetyl-alpha-D-glucosamine biosynthesis; N-acetyl-alpha-D-glucosamine 1-phosphate from alpha-D-glucosamine 6-phosphate (route II): step 2/2.</text>
</comment>
<comment type="pathway">
    <text evidence="1">Nucleotide-sugar biosynthesis; UDP-N-acetyl-alpha-D-glucosamine biosynthesis; UDP-N-acetyl-alpha-D-glucosamine from N-acetyl-alpha-D-glucosamine 1-phosphate: step 1/1.</text>
</comment>
<comment type="pathway">
    <text evidence="1">Bacterial outer membrane biogenesis; LPS lipid A biosynthesis.</text>
</comment>
<comment type="subunit">
    <text evidence="1">Homotrimer.</text>
</comment>
<comment type="subcellular location">
    <subcellularLocation>
        <location evidence="1">Cytoplasm</location>
    </subcellularLocation>
</comment>
<comment type="similarity">
    <text evidence="1">In the N-terminal section; belongs to the N-acetylglucosamine-1-phosphate uridyltransferase family.</text>
</comment>
<comment type="similarity">
    <text evidence="1">In the C-terminal section; belongs to the transferase hexapeptide repeat family.</text>
</comment>
<feature type="chain" id="PRO_0000337707" description="Bifunctional protein GlmU">
    <location>
        <begin position="1"/>
        <end position="497"/>
    </location>
</feature>
<feature type="region of interest" description="Pyrophosphorylase" evidence="1">
    <location>
        <begin position="1"/>
        <end position="241"/>
    </location>
</feature>
<feature type="region of interest" description="Linker" evidence="1">
    <location>
        <begin position="242"/>
        <end position="262"/>
    </location>
</feature>
<feature type="region of interest" description="N-acetyltransferase" evidence="1">
    <location>
        <begin position="263"/>
        <end position="497"/>
    </location>
</feature>
<feature type="active site" description="Proton acceptor" evidence="1">
    <location>
        <position position="374"/>
    </location>
</feature>
<feature type="binding site" evidence="1">
    <location>
        <begin position="14"/>
        <end position="17"/>
    </location>
    <ligand>
        <name>UDP-N-acetyl-alpha-D-glucosamine</name>
        <dbReference type="ChEBI" id="CHEBI:57705"/>
    </ligand>
</feature>
<feature type="binding site" evidence="1">
    <location>
        <position position="28"/>
    </location>
    <ligand>
        <name>UDP-N-acetyl-alpha-D-glucosamine</name>
        <dbReference type="ChEBI" id="CHEBI:57705"/>
    </ligand>
</feature>
<feature type="binding site" evidence="1">
    <location>
        <position position="81"/>
    </location>
    <ligand>
        <name>UDP-N-acetyl-alpha-D-glucosamine</name>
        <dbReference type="ChEBI" id="CHEBI:57705"/>
    </ligand>
</feature>
<feature type="binding site" evidence="1">
    <location>
        <begin position="86"/>
        <end position="87"/>
    </location>
    <ligand>
        <name>UDP-N-acetyl-alpha-D-glucosamine</name>
        <dbReference type="ChEBI" id="CHEBI:57705"/>
    </ligand>
</feature>
<feature type="binding site" evidence="1">
    <location>
        <begin position="112"/>
        <end position="114"/>
    </location>
    <ligand>
        <name>UDP-N-acetyl-alpha-D-glucosamine</name>
        <dbReference type="ChEBI" id="CHEBI:57705"/>
    </ligand>
</feature>
<feature type="binding site" evidence="1">
    <location>
        <position position="114"/>
    </location>
    <ligand>
        <name>Mg(2+)</name>
        <dbReference type="ChEBI" id="CHEBI:18420"/>
    </ligand>
</feature>
<feature type="binding site" evidence="1">
    <location>
        <position position="151"/>
    </location>
    <ligand>
        <name>UDP-N-acetyl-alpha-D-glucosamine</name>
        <dbReference type="ChEBI" id="CHEBI:57705"/>
    </ligand>
</feature>
<feature type="binding site" evidence="1">
    <location>
        <position position="166"/>
    </location>
    <ligand>
        <name>UDP-N-acetyl-alpha-D-glucosamine</name>
        <dbReference type="ChEBI" id="CHEBI:57705"/>
    </ligand>
</feature>
<feature type="binding site" evidence="1">
    <location>
        <position position="181"/>
    </location>
    <ligand>
        <name>UDP-N-acetyl-alpha-D-glucosamine</name>
        <dbReference type="ChEBI" id="CHEBI:57705"/>
    </ligand>
</feature>
<feature type="binding site" evidence="1">
    <location>
        <position position="239"/>
    </location>
    <ligand>
        <name>Mg(2+)</name>
        <dbReference type="ChEBI" id="CHEBI:18420"/>
    </ligand>
</feature>
<feature type="binding site" evidence="1">
    <location>
        <position position="239"/>
    </location>
    <ligand>
        <name>UDP-N-acetyl-alpha-D-glucosamine</name>
        <dbReference type="ChEBI" id="CHEBI:57705"/>
    </ligand>
</feature>
<feature type="binding site" evidence="1">
    <location>
        <position position="344"/>
    </location>
    <ligand>
        <name>UDP-N-acetyl-alpha-D-glucosamine</name>
        <dbReference type="ChEBI" id="CHEBI:57705"/>
    </ligand>
</feature>
<feature type="binding site" evidence="1">
    <location>
        <position position="362"/>
    </location>
    <ligand>
        <name>UDP-N-acetyl-alpha-D-glucosamine</name>
        <dbReference type="ChEBI" id="CHEBI:57705"/>
    </ligand>
</feature>
<feature type="binding site" evidence="1">
    <location>
        <position position="377"/>
    </location>
    <ligand>
        <name>UDP-N-acetyl-alpha-D-glucosamine</name>
        <dbReference type="ChEBI" id="CHEBI:57705"/>
    </ligand>
</feature>
<feature type="binding site" evidence="1">
    <location>
        <position position="388"/>
    </location>
    <ligand>
        <name>UDP-N-acetyl-alpha-D-glucosamine</name>
        <dbReference type="ChEBI" id="CHEBI:57705"/>
    </ligand>
</feature>
<feature type="binding site" evidence="1">
    <location>
        <begin position="397"/>
        <end position="398"/>
    </location>
    <ligand>
        <name>acetyl-CoA</name>
        <dbReference type="ChEBI" id="CHEBI:57288"/>
    </ligand>
</feature>
<feature type="binding site" evidence="1">
    <location>
        <position position="416"/>
    </location>
    <ligand>
        <name>acetyl-CoA</name>
        <dbReference type="ChEBI" id="CHEBI:57288"/>
    </ligand>
</feature>
<feature type="binding site" evidence="1">
    <location>
        <position position="434"/>
    </location>
    <ligand>
        <name>acetyl-CoA</name>
        <dbReference type="ChEBI" id="CHEBI:57288"/>
    </ligand>
</feature>
<protein>
    <recommendedName>
        <fullName evidence="1">Bifunctional protein GlmU</fullName>
    </recommendedName>
    <domain>
        <recommendedName>
            <fullName evidence="1">UDP-N-acetylglucosamine pyrophosphorylase</fullName>
            <ecNumber evidence="1">2.7.7.23</ecNumber>
        </recommendedName>
        <alternativeName>
            <fullName evidence="1">N-acetylglucosamine-1-phosphate uridyltransferase</fullName>
        </alternativeName>
    </domain>
    <domain>
        <recommendedName>
            <fullName evidence="1">Glucosamine-1-phosphate N-acetyltransferase</fullName>
            <ecNumber evidence="1">2.3.1.157</ecNumber>
        </recommendedName>
    </domain>
</protein>
<proteinExistence type="inferred from homology"/>
<name>GLMU_PAEAT</name>
<sequence>MSPETIGPAAVIVLAAGAGTRMKSRTPKILHEIGGRSMVGHALLAARAINPLKLALVVRHERDRVAEHVTASDPEALIVDQDDVPGTGRAVEVALKALDAEAELTGTVVVTYGDVPLLTGELLGELVATHEAEGNAVTVLTAVLDDATGYGRILRAENGTVTGIREHKDASEAERTIREVNSGIYAFDAAVLRTALEKVTTDNAQGEMYLTDVLGLARDAGGRVAAVVTEDRWQVEGANDRIQLSALAAEHNRRIIESWMRAGVTVVDPATTWIDSTVTLDEDVRLLPNTQLHGSTTVARDAVVGPDTTLTDVNVGEGAKVIRTHGSGSTIGAKASVGPFTYLRPGTVLGETGKIGAFYETKNVTIGRGSKLSHLGYAGDAEIGEDTNIGCGNITANYDGEKKHRTVIGSGVRTGSNTVFVAPVTVGDGAYSGAGAVIRKDVPAGALALSLAAQRNAEGWVAANRPGTASAKLAEAAQELASTSSQFQATIEEGKQA</sequence>
<dbReference type="EC" id="2.7.7.23" evidence="1"/>
<dbReference type="EC" id="2.3.1.157" evidence="1"/>
<dbReference type="EMBL" id="CP000474">
    <property type="protein sequence ID" value="ABM06749.1"/>
    <property type="molecule type" value="Genomic_DNA"/>
</dbReference>
<dbReference type="RefSeq" id="WP_011774070.1">
    <property type="nucleotide sequence ID" value="NC_008711.1"/>
</dbReference>
<dbReference type="SMR" id="A1R4G1"/>
<dbReference type="STRING" id="290340.AAur_1343"/>
<dbReference type="KEGG" id="aau:AAur_1343"/>
<dbReference type="eggNOG" id="COG1207">
    <property type="taxonomic scope" value="Bacteria"/>
</dbReference>
<dbReference type="HOGENOM" id="CLU_029499_15_2_11"/>
<dbReference type="OrthoDB" id="9775031at2"/>
<dbReference type="UniPathway" id="UPA00113">
    <property type="reaction ID" value="UER00532"/>
</dbReference>
<dbReference type="UniPathway" id="UPA00113">
    <property type="reaction ID" value="UER00533"/>
</dbReference>
<dbReference type="UniPathway" id="UPA00973"/>
<dbReference type="Proteomes" id="UP000000637">
    <property type="component" value="Chromosome"/>
</dbReference>
<dbReference type="GO" id="GO:0005737">
    <property type="term" value="C:cytoplasm"/>
    <property type="evidence" value="ECO:0007669"/>
    <property type="project" value="UniProtKB-SubCell"/>
</dbReference>
<dbReference type="GO" id="GO:0016020">
    <property type="term" value="C:membrane"/>
    <property type="evidence" value="ECO:0007669"/>
    <property type="project" value="GOC"/>
</dbReference>
<dbReference type="GO" id="GO:0019134">
    <property type="term" value="F:glucosamine-1-phosphate N-acetyltransferase activity"/>
    <property type="evidence" value="ECO:0007669"/>
    <property type="project" value="UniProtKB-UniRule"/>
</dbReference>
<dbReference type="GO" id="GO:0000287">
    <property type="term" value="F:magnesium ion binding"/>
    <property type="evidence" value="ECO:0007669"/>
    <property type="project" value="UniProtKB-UniRule"/>
</dbReference>
<dbReference type="GO" id="GO:0003977">
    <property type="term" value="F:UDP-N-acetylglucosamine diphosphorylase activity"/>
    <property type="evidence" value="ECO:0007669"/>
    <property type="project" value="UniProtKB-UniRule"/>
</dbReference>
<dbReference type="GO" id="GO:0000902">
    <property type="term" value="P:cell morphogenesis"/>
    <property type="evidence" value="ECO:0007669"/>
    <property type="project" value="UniProtKB-UniRule"/>
</dbReference>
<dbReference type="GO" id="GO:0071555">
    <property type="term" value="P:cell wall organization"/>
    <property type="evidence" value="ECO:0007669"/>
    <property type="project" value="UniProtKB-KW"/>
</dbReference>
<dbReference type="GO" id="GO:0009245">
    <property type="term" value="P:lipid A biosynthetic process"/>
    <property type="evidence" value="ECO:0007669"/>
    <property type="project" value="UniProtKB-UniRule"/>
</dbReference>
<dbReference type="GO" id="GO:0009252">
    <property type="term" value="P:peptidoglycan biosynthetic process"/>
    <property type="evidence" value="ECO:0007669"/>
    <property type="project" value="UniProtKB-UniRule"/>
</dbReference>
<dbReference type="GO" id="GO:0008360">
    <property type="term" value="P:regulation of cell shape"/>
    <property type="evidence" value="ECO:0007669"/>
    <property type="project" value="UniProtKB-KW"/>
</dbReference>
<dbReference type="GO" id="GO:0006048">
    <property type="term" value="P:UDP-N-acetylglucosamine biosynthetic process"/>
    <property type="evidence" value="ECO:0007669"/>
    <property type="project" value="UniProtKB-UniPathway"/>
</dbReference>
<dbReference type="CDD" id="cd02540">
    <property type="entry name" value="GT2_GlmU_N_bac"/>
    <property type="match status" value="1"/>
</dbReference>
<dbReference type="CDD" id="cd03353">
    <property type="entry name" value="LbH_GlmU_C"/>
    <property type="match status" value="1"/>
</dbReference>
<dbReference type="Gene3D" id="2.160.10.10">
    <property type="entry name" value="Hexapeptide repeat proteins"/>
    <property type="match status" value="1"/>
</dbReference>
<dbReference type="Gene3D" id="3.90.550.10">
    <property type="entry name" value="Spore Coat Polysaccharide Biosynthesis Protein SpsA, Chain A"/>
    <property type="match status" value="1"/>
</dbReference>
<dbReference type="HAMAP" id="MF_01631">
    <property type="entry name" value="GlmU"/>
    <property type="match status" value="1"/>
</dbReference>
<dbReference type="InterPro" id="IPR005882">
    <property type="entry name" value="Bifunctional_GlmU"/>
</dbReference>
<dbReference type="InterPro" id="IPR050065">
    <property type="entry name" value="GlmU-like"/>
</dbReference>
<dbReference type="InterPro" id="IPR038009">
    <property type="entry name" value="GlmU_C_LbH"/>
</dbReference>
<dbReference type="InterPro" id="IPR025877">
    <property type="entry name" value="MobA-like_NTP_Trfase"/>
</dbReference>
<dbReference type="InterPro" id="IPR029044">
    <property type="entry name" value="Nucleotide-diphossugar_trans"/>
</dbReference>
<dbReference type="InterPro" id="IPR011004">
    <property type="entry name" value="Trimer_LpxA-like_sf"/>
</dbReference>
<dbReference type="NCBIfam" id="TIGR01173">
    <property type="entry name" value="glmU"/>
    <property type="match status" value="1"/>
</dbReference>
<dbReference type="NCBIfam" id="NF010932">
    <property type="entry name" value="PRK14352.1"/>
    <property type="match status" value="1"/>
</dbReference>
<dbReference type="PANTHER" id="PTHR43584:SF3">
    <property type="entry name" value="BIFUNCTIONAL PROTEIN GLMU"/>
    <property type="match status" value="1"/>
</dbReference>
<dbReference type="PANTHER" id="PTHR43584">
    <property type="entry name" value="NUCLEOTIDYL TRANSFERASE"/>
    <property type="match status" value="1"/>
</dbReference>
<dbReference type="Pfam" id="PF12804">
    <property type="entry name" value="NTP_transf_3"/>
    <property type="match status" value="1"/>
</dbReference>
<dbReference type="SUPFAM" id="SSF53448">
    <property type="entry name" value="Nucleotide-diphospho-sugar transferases"/>
    <property type="match status" value="1"/>
</dbReference>
<dbReference type="SUPFAM" id="SSF51161">
    <property type="entry name" value="Trimeric LpxA-like enzymes"/>
    <property type="match status" value="1"/>
</dbReference>
<gene>
    <name evidence="1" type="primary">glmU</name>
    <name type="ordered locus">AAur_1343</name>
</gene>
<organism>
    <name type="scientific">Paenarthrobacter aurescens (strain TC1)</name>
    <dbReference type="NCBI Taxonomy" id="290340"/>
    <lineage>
        <taxon>Bacteria</taxon>
        <taxon>Bacillati</taxon>
        <taxon>Actinomycetota</taxon>
        <taxon>Actinomycetes</taxon>
        <taxon>Micrococcales</taxon>
        <taxon>Micrococcaceae</taxon>
        <taxon>Paenarthrobacter</taxon>
    </lineage>
</organism>
<reference key="1">
    <citation type="journal article" date="2006" name="PLoS Genet.">
        <title>Secrets of soil survival revealed by the genome sequence of Arthrobacter aurescens TC1.</title>
        <authorList>
            <person name="Mongodin E.F."/>
            <person name="Shapir N."/>
            <person name="Daugherty S.C."/>
            <person name="DeBoy R.T."/>
            <person name="Emerson J.B."/>
            <person name="Shvartzbeyn A."/>
            <person name="Radune D."/>
            <person name="Vamathevan J."/>
            <person name="Riggs F."/>
            <person name="Grinberg V."/>
            <person name="Khouri H.M."/>
            <person name="Wackett L.P."/>
            <person name="Nelson K.E."/>
            <person name="Sadowsky M.J."/>
        </authorList>
    </citation>
    <scope>NUCLEOTIDE SEQUENCE [LARGE SCALE GENOMIC DNA]</scope>
    <source>
        <strain>TC1</strain>
    </source>
</reference>
<accession>A1R4G1</accession>
<keyword id="KW-0012">Acyltransferase</keyword>
<keyword id="KW-0133">Cell shape</keyword>
<keyword id="KW-0961">Cell wall biogenesis/degradation</keyword>
<keyword id="KW-0963">Cytoplasm</keyword>
<keyword id="KW-0460">Magnesium</keyword>
<keyword id="KW-0479">Metal-binding</keyword>
<keyword id="KW-0511">Multifunctional enzyme</keyword>
<keyword id="KW-0548">Nucleotidyltransferase</keyword>
<keyword id="KW-0573">Peptidoglycan synthesis</keyword>
<keyword id="KW-0677">Repeat</keyword>
<keyword id="KW-0808">Transferase</keyword>